<organism>
    <name type="scientific">Beet mosaic virus</name>
    <name type="common">BtMV</name>
    <dbReference type="NCBI Taxonomy" id="114921"/>
    <lineage>
        <taxon>Viruses</taxon>
        <taxon>Riboviria</taxon>
        <taxon>Orthornavirae</taxon>
        <taxon>Pisuviricota</taxon>
        <taxon>Stelpaviricetes</taxon>
        <taxon>Patatavirales</taxon>
        <taxon>Potyviridae</taxon>
        <taxon>Potyvirus</taxon>
        <taxon>Potyvirus betaceum</taxon>
    </lineage>
</organism>
<protein>
    <recommendedName>
        <fullName>P3N-PIPO polyprotein</fullName>
    </recommendedName>
    <component>
        <recommendedName>
            <fullName>P1 protease</fullName>
            <ecNumber>3.4.21.-</ecNumber>
        </recommendedName>
        <alternativeName>
            <fullName>N-terminal protein</fullName>
        </alternativeName>
        <alternativeName>
            <fullName>P1 proteinase</fullName>
        </alternativeName>
    </component>
    <component>
        <recommendedName>
            <fullName>Helper component proteinase</fullName>
            <shortName>HC-pro</shortName>
            <ecNumber>3.4.22.45</ecNumber>
        </recommendedName>
    </component>
    <component>
        <recommendedName>
            <fullName>Movement protein P3N-PIPO</fullName>
        </recommendedName>
        <alternativeName>
            <fullName>Pretty interesting potyviridae ORF</fullName>
            <shortName>PIPO</shortName>
        </alternativeName>
    </component>
</protein>
<organismHost>
    <name type="scientific">Amaranthus retroflexus</name>
    <name type="common">Redroot amaranth</name>
    <name type="synonym">American pigweed</name>
    <dbReference type="NCBI Taxonomy" id="124763"/>
</organismHost>
<organismHost>
    <name type="scientific">Beta vulgaris subsp. maritima</name>
    <name type="common">Sea beet</name>
    <name type="synonym">Beta maritima</name>
    <dbReference type="NCBI Taxonomy" id="350892"/>
</organismHost>
<organismHost>
    <name type="scientific">Beta vulgaris subsp. vulgaris</name>
    <name type="common">Beet</name>
    <dbReference type="NCBI Taxonomy" id="3555"/>
</organismHost>
<organismHost>
    <name type="scientific">Chenopodium album</name>
    <name type="common">Fat hen</name>
    <dbReference type="NCBI Taxonomy" id="3559"/>
</organismHost>
<organismHost>
    <name type="scientific">Melilotus indicus</name>
    <name type="common">Sourclover</name>
    <name type="synonym">Yellow sweet clover</name>
    <dbReference type="NCBI Taxonomy" id="200951"/>
</organismHost>
<organismHost>
    <name type="scientific">Sonchus arvensis</name>
    <name type="common">Perennial sowthistle</name>
    <dbReference type="NCBI Taxonomy" id="50192"/>
</organismHost>
<organismHost>
    <name type="scientific">Spinacia oleracea</name>
    <name type="common">Spinach</name>
    <dbReference type="NCBI Taxonomy" id="3562"/>
</organismHost>
<organismHost>
    <name type="scientific">Trifolium incarnatum</name>
    <name type="common">Crimson clover</name>
    <dbReference type="NCBI Taxonomy" id="60916"/>
</organismHost>
<dbReference type="EC" id="3.4.21.-"/>
<dbReference type="EC" id="3.4.22.45"/>
<dbReference type="EMBL" id="AY206394">
    <property type="status" value="NOT_ANNOTATED_CDS"/>
    <property type="molecule type" value="Genomic_RNA"/>
</dbReference>
<dbReference type="SMR" id="P0CJ96"/>
<dbReference type="Proteomes" id="UP000007617">
    <property type="component" value="Genome"/>
</dbReference>
<dbReference type="GO" id="GO:0044219">
    <property type="term" value="C:host cell plasmodesma"/>
    <property type="evidence" value="ECO:0007669"/>
    <property type="project" value="UniProtKB-SubCell"/>
</dbReference>
<dbReference type="GO" id="GO:0004197">
    <property type="term" value="F:cysteine-type endopeptidase activity"/>
    <property type="evidence" value="ECO:0007669"/>
    <property type="project" value="InterPro"/>
</dbReference>
<dbReference type="GO" id="GO:0008236">
    <property type="term" value="F:serine-type peptidase activity"/>
    <property type="evidence" value="ECO:0007669"/>
    <property type="project" value="UniProtKB-KW"/>
</dbReference>
<dbReference type="GO" id="GO:0006508">
    <property type="term" value="P:proteolysis"/>
    <property type="evidence" value="ECO:0007669"/>
    <property type="project" value="UniProtKB-KW"/>
</dbReference>
<dbReference type="GO" id="GO:0052170">
    <property type="term" value="P:symbiont-mediated suppression of host innate immune response"/>
    <property type="evidence" value="ECO:0007669"/>
    <property type="project" value="UniProtKB-KW"/>
</dbReference>
<dbReference type="GO" id="GO:0046740">
    <property type="term" value="P:transport of virus in host, cell to cell"/>
    <property type="evidence" value="ECO:0007669"/>
    <property type="project" value="UniProtKB-KW"/>
</dbReference>
<dbReference type="GO" id="GO:0075523">
    <property type="term" value="P:viral translational frameshifting"/>
    <property type="evidence" value="ECO:0007669"/>
    <property type="project" value="UniProtKB-KW"/>
</dbReference>
<dbReference type="Gene3D" id="3.90.70.150">
    <property type="entry name" value="Helper component proteinase"/>
    <property type="match status" value="1"/>
</dbReference>
<dbReference type="InterPro" id="IPR001456">
    <property type="entry name" value="HC-pro"/>
</dbReference>
<dbReference type="InterPro" id="IPR031159">
    <property type="entry name" value="HC_PRO_CPD_dom"/>
</dbReference>
<dbReference type="InterPro" id="IPR042308">
    <property type="entry name" value="HC_PRO_CPD_sf"/>
</dbReference>
<dbReference type="InterPro" id="IPR002540">
    <property type="entry name" value="Pept_S30_P1_potyvir"/>
</dbReference>
<dbReference type="InterPro" id="IPR039560">
    <property type="entry name" value="Potyvirid-P3"/>
</dbReference>
<dbReference type="Pfam" id="PF00851">
    <property type="entry name" value="Peptidase_C6"/>
    <property type="match status" value="1"/>
</dbReference>
<dbReference type="Pfam" id="PF01577">
    <property type="entry name" value="Peptidase_S30"/>
    <property type="match status" value="1"/>
</dbReference>
<dbReference type="Pfam" id="PF13608">
    <property type="entry name" value="Potyvirid-P3"/>
    <property type="match status" value="1"/>
</dbReference>
<dbReference type="PROSITE" id="PS51744">
    <property type="entry name" value="HC_PRO_CPD"/>
    <property type="match status" value="1"/>
</dbReference>
<dbReference type="PROSITE" id="PS51871">
    <property type="entry name" value="PV_P1_PRO"/>
    <property type="match status" value="1"/>
</dbReference>
<evidence type="ECO:0000250" key="1"/>
<evidence type="ECO:0000250" key="2">
    <source>
        <dbReference type="UniProtKB" id="P04517"/>
    </source>
</evidence>
<evidence type="ECO:0000250" key="3">
    <source>
        <dbReference type="UniProtKB" id="P0CK11"/>
    </source>
</evidence>
<evidence type="ECO:0000255" key="4"/>
<evidence type="ECO:0000255" key="5">
    <source>
        <dbReference type="PROSITE-ProRule" id="PRU01080"/>
    </source>
</evidence>
<evidence type="ECO:0000255" key="6">
    <source>
        <dbReference type="PROSITE-ProRule" id="PRU01219"/>
    </source>
</evidence>
<evidence type="ECO:0000305" key="7"/>
<feature type="chain" id="PRO_0000420051" description="P3N-PIPO polyprotein">
    <location>
        <begin position="1"/>
        <end position="1038"/>
    </location>
</feature>
<feature type="chain" id="PRO_0000420052" description="P1 protease" evidence="4">
    <location>
        <begin position="1"/>
        <end position="313"/>
    </location>
</feature>
<feature type="chain" id="PRO_0000420053" description="Helper component proteinase" evidence="4">
    <location>
        <begin position="314"/>
        <end position="770"/>
    </location>
</feature>
<feature type="chain" id="PRO_0000408539" description="Movement protein P3N-PIPO">
    <location>
        <begin position="771"/>
        <end position="1038"/>
    </location>
</feature>
<feature type="domain" description="Peptidase S30" evidence="6">
    <location>
        <begin position="170"/>
        <end position="313"/>
    </location>
</feature>
<feature type="domain" description="Peptidase C6" evidence="5">
    <location>
        <begin position="648"/>
        <end position="770"/>
    </location>
</feature>
<feature type="short sequence motif" description="Involved in interaction with stylet and aphid transmission" evidence="1">
    <location>
        <begin position="365"/>
        <end position="368"/>
    </location>
</feature>
<feature type="short sequence motif" description="Involved in virions binding and aphid transmission" evidence="1">
    <location>
        <begin position="622"/>
        <end position="624"/>
    </location>
</feature>
<feature type="active site" description="For P1 proteinase activity" evidence="6">
    <location>
        <position position="224"/>
    </location>
</feature>
<feature type="active site" description="For P1 proteinase activity" evidence="6">
    <location>
        <position position="233"/>
    </location>
</feature>
<feature type="active site" description="For P1 proteinase activity" evidence="6">
    <location>
        <position position="266"/>
    </location>
</feature>
<feature type="active site" description="For helper component proteinase activity" evidence="5">
    <location>
        <position position="656"/>
    </location>
</feature>
<feature type="active site" description="For helper component proteinase activity" evidence="5">
    <location>
        <position position="729"/>
    </location>
</feature>
<feature type="site" description="Cleavage; by P1 proteinase" evidence="6">
    <location>
        <begin position="313"/>
        <end position="314"/>
    </location>
</feature>
<feature type="site" description="Cleavage; by autolysis" evidence="5">
    <location>
        <begin position="770"/>
        <end position="771"/>
    </location>
</feature>
<feature type="unsure residue">
    <location>
        <begin position="922"/>
        <end position="928"/>
    </location>
</feature>
<reference key="1">
    <citation type="journal article" date="2004" name="Arch. Virol.">
        <title>The complete nucleotide sequence, genome organization, and specific detection of beet mosaic virus.</title>
        <authorList>
            <person name="Nemchinov L.G."/>
            <person name="Hammond J."/>
            <person name="Jordan R."/>
            <person name="Hammond R.W."/>
        </authorList>
    </citation>
    <scope>NUCLEOTIDE SEQUENCE [GENOMIC RNA]</scope>
</reference>
<comment type="function">
    <molecule>Helper component proteinase</molecule>
    <text evidence="2">Required for aphid transmission and also has proteolytic activity. Only cleaves a Gly-Gly dipeptide at its own C-terminus. Interacts with virions and aphid stylets. Acts as a suppressor of RNA-mediated gene silencing, also known as post-transcriptional gene silencing (PTGS), a mechanism of plant viral defense that limits the accumulation of viral RNAs. May have RNA-binding activity.</text>
</comment>
<comment type="function">
    <molecule>Movement protein P3N-PIPO</molecule>
    <text evidence="3">Allows efficient cell to cell propagation, by bypassing the host cell wall barrier. Transports viral genome to neighboring plant cells directly through plasmosdesmata, without any budding.</text>
</comment>
<comment type="catalytic activity">
    <molecule>Helper component proteinase</molecule>
    <reaction>
        <text>Hydrolyzes a Gly-|-Gly bond at its own C-terminus, commonly in the sequence -Tyr-Xaa-Val-Gly-|-Gly, in the processing of the potyviral polyprotein.</text>
        <dbReference type="EC" id="3.4.22.45"/>
    </reaction>
</comment>
<comment type="subunit">
    <molecule>Movement protein P3N-PIPO</molecule>
    <text evidence="3">Interacts (via PIPO domain) with host PCaP1 protein; this interaction may help to anchor the movement complex to the plasma membrane from which the complex could move to the plasmodesmata.</text>
</comment>
<comment type="subcellular location">
    <molecule>Movement protein P3N-PIPO</molecule>
    <subcellularLocation>
        <location evidence="3">Host cell junction</location>
        <location evidence="3">Host plasmodesma</location>
    </subcellularLocation>
</comment>
<comment type="alternative products">
    <event type="ribosomal frameshifting"/>
    <isoform>
        <id>P0CJ96-1</id>
        <name>P3N-PIPO polyprotein</name>
        <sequence type="displayed"/>
    </isoform>
    <isoform>
        <id>Q6XW15-1</id>
        <name>Genome polyprotein</name>
        <sequence type="external"/>
    </isoform>
</comment>
<comment type="domain">
    <text evidence="1">The N-terminus of helper component proteinase is involved in interaction with stylets. The central part is involved in interaction with virions and the C-terminus is involved in cell-to cell movement of the virus (By similarity).</text>
</comment>
<comment type="PTM">
    <text evidence="1">Potyviral RNA is expressed as two polyproteins which undergo post-translational proteolytic processing. Genome polyprotein is processed by NIa-pro, P1 and HC-pro proteinases resulting in the production of at least ten individual proteins. P3N-PIPO is cleaved by P1 and HC-pro proteinases resulting in the production of three individual proteins. The P1 proteinase and the HC-pro cleave only their respective C-termini autocatalytically (By similarity).</text>
</comment>
<comment type="miscellaneous">
    <molecule>Isoform P3N-PIPO polyprotein</molecule>
    <text>Produced by -1 ribosomal frameshifting in P3 ORF.</text>
</comment>
<comment type="similarity">
    <text evidence="7">Belongs to the potyviridae P3N-PIPO polyprotein family.</text>
</comment>
<sequence length="1038" mass="117627">MATMMHFGQFPSNIPLRAATCCTKVHSTLVTKEMMASSVKPAESSSVARPIIYSSAATDGYEKAQRAFEASFREKYSGKLEAMKYGKMVKKGGLTYVKRAGPQAIAKGIEMDAAIEKFNTAFNAGELENVTLEGDITAGISVARGESVWLRSVFWSRSLKKQARKKTPKLVAKSDFDDLFNKVLKVASLGNIPVEIVGKKANKILRCGYRRVNTSTIPYFHLPHHNSNYICRELHPQRVRWLVPLLVRHRKIRDQFSDSMIARGWSGLILPKYIASTCGRRYDEVIVRGRLYGRVEDARTKLPAGDVGRTMHYSSGEERFFAGWKEGFEKLVPAQKEHICKIVQDNKFCGKLAASIVQIAFPCHKMACDVCRNKFNEMTPEAYSELIDKHIDQRMNEINEAIVRFPGLKQVVSNFRSKHIASTNIKDNLEVAKLTQGHKANQMMQLARINSILIKGNTATPSEISDASGLLLEITRWFNNHLSVIDKGSLRAFRNKRSSKALVNPSLLCDNQRDKNGNFIWGERGYHSKRFFASHFDEVTPGDGYKEYIIRKGPQGQRKLAIGNLIVSFDLEKTRQALKGEEVEKLPLSNSCVSKRNGNYVYTSCCVTLDDGTPLYSNIKNPTKRHLVVGTTGDPKIVDLPATDTDKMYIAKEGYCYLNIFLAMLINVNENEAKAFTKMVRDIIIPMLGTWPTMQDLATACFMMTAFFPETSSAELPRILVDHTNQTMHVIDSFGSLTTGYHVLKAGTAAQLIDFASTELEGEMKWYRVGGHGLPVKEKMISALITSIFRPKKLVYLIEEDPYVLIMAMCSPRLIISLFNNGALELAAKHWISRDKNVSAIFAMLMDLSTEMSKAELLIEQHRMINECAKRVHDTQNYLDEVGPHQQEVRTFLALISDELEADKELHKTGFANFSERFHSLTEKNVCGRVRRGMARFKLVRQILLCHLCVQAQTAFNIRFAPEKVRRYRCQIRHIAQLVRWKDEGTPKWRPEVCYKPDHPIHELHQARYARQSHAHHVQLPKGPRILYECCLGDSFAH</sequence>
<name>MVP_BTMV</name>
<keyword id="KW-1031">Host cell junction</keyword>
<keyword id="KW-0945">Host-virus interaction</keyword>
<keyword id="KW-0378">Hydrolase</keyword>
<keyword id="KW-1090">Inhibition of host innate immune response by virus</keyword>
<keyword id="KW-0645">Protease</keyword>
<keyword id="KW-0688">Ribosomal frameshifting</keyword>
<keyword id="KW-0720">Serine protease</keyword>
<keyword id="KW-0941">Suppressor of RNA silencing</keyword>
<keyword id="KW-0813">Transport</keyword>
<keyword id="KW-0899">Viral immunoevasion</keyword>
<keyword id="KW-0916">Viral movement protein</keyword>
<proteinExistence type="inferred from homology"/>
<accession>P0CJ96</accession>